<feature type="signal peptide" evidence="4">
    <location>
        <begin position="1"/>
        <end position="27"/>
    </location>
</feature>
<feature type="chain" id="PRO_0000026937" description="Periplasmic pH-dependent serine endoprotease DegQ">
    <location>
        <begin position="28"/>
        <end position="455"/>
    </location>
</feature>
<feature type="domain" description="PDZ 1" evidence="2">
    <location>
        <begin position="258"/>
        <end position="349"/>
    </location>
</feature>
<feature type="domain" description="PDZ 2" evidence="2">
    <location>
        <begin position="355"/>
        <end position="447"/>
    </location>
</feature>
<feature type="active site" description="Charge relay system" evidence="3">
    <location>
        <position position="109"/>
    </location>
</feature>
<feature type="active site" description="Charge relay system" evidence="3">
    <location>
        <position position="139"/>
    </location>
</feature>
<feature type="active site" description="Charge relay system" evidence="3">
    <location>
        <position position="214"/>
    </location>
</feature>
<feature type="binding site" evidence="1">
    <location>
        <position position="59"/>
    </location>
    <ligand>
        <name>substrate</name>
    </ligand>
</feature>
<feature type="binding site" evidence="1">
    <location>
        <position position="109"/>
    </location>
    <ligand>
        <name>substrate</name>
    </ligand>
</feature>
<feature type="binding site" evidence="1">
    <location>
        <position position="139"/>
    </location>
    <ligand>
        <name>substrate</name>
    </ligand>
</feature>
<feature type="binding site">
    <location>
        <begin position="212"/>
        <end position="214"/>
    </location>
    <ligand>
        <name>substrate</name>
    </ligand>
</feature>
<feature type="binding site" evidence="3">
    <location>
        <position position="212"/>
    </location>
    <ligand>
        <name>substrate</name>
    </ligand>
</feature>
<feature type="binding site">
    <location>
        <begin position="230"/>
        <end position="234"/>
    </location>
    <ligand>
        <name>substrate</name>
    </ligand>
</feature>
<feature type="binding site">
    <location>
        <begin position="269"/>
        <end position="273"/>
    </location>
    <ligand>
        <name>substrate</name>
    </ligand>
</feature>
<feature type="mutagenesis site" description="Loss of peptidase activity." evidence="3">
    <original>S</original>
    <variation>A</variation>
    <location>
        <position position="187"/>
    </location>
</feature>
<feature type="mutagenesis site" description="Reduces the peptidase activity." evidence="3">
    <original>R</original>
    <variation>A</variation>
    <location>
        <position position="191"/>
    </location>
</feature>
<feature type="mutagenesis site" description="Reduces the peptidase activity." evidence="3">
    <original>R</original>
    <variation>A</variation>
    <location>
        <position position="329"/>
    </location>
</feature>
<feature type="helix" evidence="7">
    <location>
        <begin position="43"/>
        <end position="49"/>
    </location>
</feature>
<feature type="helix" evidence="7">
    <location>
        <begin position="50"/>
        <end position="52"/>
    </location>
</feature>
<feature type="strand" evidence="7">
    <location>
        <begin position="53"/>
        <end position="55"/>
    </location>
</feature>
<feature type="strand" evidence="7">
    <location>
        <begin position="93"/>
        <end position="98"/>
    </location>
</feature>
<feature type="turn" evidence="7">
    <location>
        <begin position="99"/>
        <end position="102"/>
    </location>
</feature>
<feature type="strand" evidence="7">
    <location>
        <begin position="103"/>
        <end position="106"/>
    </location>
</feature>
<feature type="helix" evidence="7">
    <location>
        <begin position="108"/>
        <end position="110"/>
    </location>
</feature>
<feature type="strand" evidence="7">
    <location>
        <begin position="117"/>
        <end position="120"/>
    </location>
</feature>
<feature type="strand" evidence="7">
    <location>
        <begin position="126"/>
        <end position="135"/>
    </location>
</feature>
<feature type="turn" evidence="7">
    <location>
        <begin position="136"/>
        <end position="139"/>
    </location>
</feature>
<feature type="strand" evidence="7">
    <location>
        <begin position="140"/>
        <end position="147"/>
    </location>
</feature>
<feature type="helix" evidence="7">
    <location>
        <begin position="159"/>
        <end position="161"/>
    </location>
</feature>
<feature type="strand" evidence="7">
    <location>
        <begin position="166"/>
        <end position="172"/>
    </location>
</feature>
<feature type="helix" evidence="7">
    <location>
        <begin position="174"/>
        <end position="176"/>
    </location>
</feature>
<feature type="strand" evidence="7">
    <location>
        <begin position="180"/>
        <end position="188"/>
    </location>
</feature>
<feature type="strand" evidence="8">
    <location>
        <begin position="194"/>
        <end position="199"/>
    </location>
</feature>
<feature type="strand" evidence="7">
    <location>
        <begin position="203"/>
        <end position="207"/>
    </location>
</feature>
<feature type="turn" evidence="7">
    <location>
        <begin position="211"/>
        <end position="215"/>
    </location>
</feature>
<feature type="strand" evidence="7">
    <location>
        <begin position="216"/>
        <end position="219"/>
    </location>
</feature>
<feature type="strand" evidence="7">
    <location>
        <begin position="225"/>
        <end position="230"/>
    </location>
</feature>
<feature type="strand" evidence="7">
    <location>
        <begin position="243"/>
        <end position="247"/>
    </location>
</feature>
<feature type="helix" evidence="7">
    <location>
        <begin position="248"/>
        <end position="264"/>
    </location>
</feature>
<feature type="strand" evidence="8">
    <location>
        <begin position="271"/>
        <end position="275"/>
    </location>
</feature>
<feature type="helix" evidence="8">
    <location>
        <begin position="278"/>
        <end position="283"/>
    </location>
</feature>
<feature type="strand" evidence="8">
    <location>
        <begin position="290"/>
        <end position="297"/>
    </location>
</feature>
<feature type="helix" evidence="8">
    <location>
        <begin position="302"/>
        <end position="306"/>
    </location>
</feature>
<feature type="helix" evidence="8">
    <location>
        <begin position="325"/>
        <end position="333"/>
    </location>
</feature>
<feature type="strand" evidence="8">
    <location>
        <begin position="340"/>
        <end position="347"/>
    </location>
</feature>
<feature type="strand" evidence="8">
    <location>
        <begin position="350"/>
        <end position="357"/>
    </location>
</feature>
<comment type="function">
    <text evidence="4 5">DegQ could degrade transiently denatured and unfolded proteins which accumulate in the periplasm following stress conditions. DegQ is efficient with Val-Xaa and Ile-Xaa peptide bonds, suggesting a preference for a beta-branched side chain amino acids. Only unfolded proteins devoid of disulfide bonds appear capable to be cleaved, thereby preventing non-specific proteolysis of folded proteins. DegQ can substitute for the periplasmic protease DegP.</text>
</comment>
<comment type="catalytic activity">
    <reaction>
        <text>Acts on substrates that are at least partially unfolded. The cleavage site P1 residue is normally between a pair of hydrophobic residues, such as Val-|-Val.</text>
        <dbReference type="EC" id="3.4.21.107"/>
    </reaction>
</comment>
<comment type="activity regulation">
    <text evidence="4">Inhibited by diisopropylfluorophosphate (DFP).</text>
</comment>
<comment type="biophysicochemical properties">
    <phDependence>
        <text evidence="3">Optimum pH is 5.5. The degradation is efficient at pH values between 4.5 and 6.</text>
    </phDependence>
</comment>
<comment type="subunit">
    <text evidence="3 5">DegQ can reversibly switch between different oligomeric forms that represent inactive (6-mer) and active (12- and 24-mer) protease states. Substrate binding triggers the conversion of the resting DegQ trimer and hexamer into catalytically active 12- and 24-mers. The conversion of 6-mer (DegQ6) into 12-mer (DegQ12) or 24-mer (DegQ24) is crucial in regulating protease activity.</text>
</comment>
<comment type="interaction">
    <interactant intactId="EBI-554733">
        <id>P39099</id>
    </interactant>
    <interactant intactId="EBI-554733">
        <id>P39099</id>
        <label>degQ</label>
    </interactant>
    <organismsDiffer>false</organismsDiffer>
    <experiments>6</experiments>
</comment>
<comment type="interaction">
    <interactant intactId="EBI-554733">
        <id>P39099</id>
    </interactant>
    <interactant intactId="EBI-371347">
        <id>P0A910</id>
        <label>ompA</label>
    </interactant>
    <organismsDiffer>false</organismsDiffer>
    <experiments>2</experiments>
</comment>
<comment type="subcellular location">
    <subcellularLocation>
        <location evidence="4">Periplasm</location>
    </subcellularLocation>
</comment>
<comment type="similarity">
    <text evidence="6">Belongs to the peptidase S1C family.</text>
</comment>
<protein>
    <recommendedName>
        <fullName>Periplasmic pH-dependent serine endoprotease DegQ</fullName>
        <ecNumber>3.4.21.107</ecNumber>
    </recommendedName>
    <alternativeName>
        <fullName>Protease Do</fullName>
    </alternativeName>
</protein>
<dbReference type="EC" id="3.4.21.107"/>
<dbReference type="EMBL" id="U15661">
    <property type="protein sequence ID" value="AAC43992.1"/>
    <property type="molecule type" value="Genomic_DNA"/>
</dbReference>
<dbReference type="EMBL" id="U32495">
    <property type="protein sequence ID" value="AAC44005.1"/>
    <property type="molecule type" value="Genomic_DNA"/>
</dbReference>
<dbReference type="EMBL" id="U18997">
    <property type="protein sequence ID" value="AAA58036.1"/>
    <property type="molecule type" value="Genomic_DNA"/>
</dbReference>
<dbReference type="EMBL" id="U00096">
    <property type="protein sequence ID" value="AAC76266.1"/>
    <property type="molecule type" value="Genomic_DNA"/>
</dbReference>
<dbReference type="EMBL" id="AP009048">
    <property type="protein sequence ID" value="BAE77277.1"/>
    <property type="molecule type" value="Genomic_DNA"/>
</dbReference>
<dbReference type="PIR" id="JC6051">
    <property type="entry name" value="JC6051"/>
</dbReference>
<dbReference type="RefSeq" id="NP_417701.1">
    <property type="nucleotide sequence ID" value="NC_000913.3"/>
</dbReference>
<dbReference type="RefSeq" id="WP_001295271.1">
    <property type="nucleotide sequence ID" value="NZ_STEB01000012.1"/>
</dbReference>
<dbReference type="PDB" id="3STI">
    <property type="method" value="X-ray"/>
    <property type="resolution" value="2.60 A"/>
    <property type="chains" value="A/B/C=28-264"/>
</dbReference>
<dbReference type="PDB" id="3STJ">
    <property type="method" value="X-ray"/>
    <property type="resolution" value="2.60 A"/>
    <property type="chains" value="A/B/C/D/E/F/G/H/I/J/K/L=28-364"/>
</dbReference>
<dbReference type="PDB" id="4A8A">
    <property type="method" value="EM"/>
    <property type="resolution" value="14.20 A"/>
    <property type="chains" value="A/B/C/D/E/F/G/H/I/J/K/L=28-455"/>
</dbReference>
<dbReference type="PDB" id="4A8B">
    <property type="method" value="EM"/>
    <property type="resolution" value="13.00 A"/>
    <property type="chains" value="A/B/C/D/E/F/G/H/I/J/K/L=28-455"/>
</dbReference>
<dbReference type="PDB" id="4A8C">
    <property type="method" value="EM"/>
    <property type="resolution" value="7.50 A"/>
    <property type="chains" value="A/B/C/D/E/F/G/H/I/J/K/L=28-455"/>
</dbReference>
<dbReference type="PDB" id="4A9G">
    <property type="method" value="EM"/>
    <property type="resolution" value="7.50 A"/>
    <property type="chains" value="A/B/C/D/E/F/G/H/I/J/K/L/M/N/O/P/Q/R/S/T/U/V/W/Y=28-455"/>
</dbReference>
<dbReference type="PDB" id="8W69">
    <property type="method" value="EM"/>
    <property type="resolution" value="3.60 A"/>
    <property type="chains" value="A/B/C/D/E/F=1-455"/>
</dbReference>
<dbReference type="PDBsum" id="3STI"/>
<dbReference type="PDBsum" id="3STJ"/>
<dbReference type="PDBsum" id="4A8A"/>
<dbReference type="PDBsum" id="4A8B"/>
<dbReference type="PDBsum" id="4A8C"/>
<dbReference type="PDBsum" id="4A9G"/>
<dbReference type="PDBsum" id="8W69"/>
<dbReference type="EMDB" id="EMD-1981"/>
<dbReference type="EMDB" id="EMD-1982"/>
<dbReference type="EMDB" id="EMD-1983"/>
<dbReference type="EMDB" id="EMD-1984"/>
<dbReference type="SMR" id="P39099"/>
<dbReference type="BioGRID" id="4261912">
    <property type="interactions" value="44"/>
</dbReference>
<dbReference type="DIP" id="DIP-9424N"/>
<dbReference type="FunCoup" id="P39099">
    <property type="interactions" value="464"/>
</dbReference>
<dbReference type="IntAct" id="P39099">
    <property type="interactions" value="10"/>
</dbReference>
<dbReference type="STRING" id="511145.b3234"/>
<dbReference type="MEROPS" id="S01.274"/>
<dbReference type="MoonProt" id="P39099"/>
<dbReference type="jPOST" id="P39099"/>
<dbReference type="PaxDb" id="511145-b3234"/>
<dbReference type="EnsemblBacteria" id="AAC76266">
    <property type="protein sequence ID" value="AAC76266"/>
    <property type="gene ID" value="b3234"/>
</dbReference>
<dbReference type="GeneID" id="75173402"/>
<dbReference type="GeneID" id="947812"/>
<dbReference type="KEGG" id="ecj:JW3203"/>
<dbReference type="KEGG" id="eco:b3234"/>
<dbReference type="KEGG" id="ecoc:C3026_17595"/>
<dbReference type="PATRIC" id="fig|1411691.4.peg.3494"/>
<dbReference type="EchoBASE" id="EB2496"/>
<dbReference type="eggNOG" id="COG0265">
    <property type="taxonomic scope" value="Bacteria"/>
</dbReference>
<dbReference type="HOGENOM" id="CLU_020120_1_1_6"/>
<dbReference type="InParanoid" id="P39099"/>
<dbReference type="OMA" id="KGMEMSA"/>
<dbReference type="OrthoDB" id="9758917at2"/>
<dbReference type="PhylomeDB" id="P39099"/>
<dbReference type="BioCyc" id="EcoCyc:G7682-MONOMER"/>
<dbReference type="BioCyc" id="MetaCyc:G7682-MONOMER"/>
<dbReference type="BRENDA" id="3.4.21.107">
    <property type="organism ID" value="2165"/>
</dbReference>
<dbReference type="EvolutionaryTrace" id="P39099"/>
<dbReference type="PRO" id="PR:P39099"/>
<dbReference type="Proteomes" id="UP000000625">
    <property type="component" value="Chromosome"/>
</dbReference>
<dbReference type="GO" id="GO:0042597">
    <property type="term" value="C:periplasmic space"/>
    <property type="evidence" value="ECO:0000314"/>
    <property type="project" value="UniProtKB"/>
</dbReference>
<dbReference type="GO" id="GO:0042802">
    <property type="term" value="F:identical protein binding"/>
    <property type="evidence" value="ECO:0000353"/>
    <property type="project" value="IntAct"/>
</dbReference>
<dbReference type="GO" id="GO:0008233">
    <property type="term" value="F:peptidase activity"/>
    <property type="evidence" value="ECO:0000314"/>
    <property type="project" value="EcoliWiki"/>
</dbReference>
<dbReference type="GO" id="GO:0004252">
    <property type="term" value="F:serine-type endopeptidase activity"/>
    <property type="evidence" value="ECO:0000314"/>
    <property type="project" value="UniProtKB"/>
</dbReference>
<dbReference type="GO" id="GO:0006515">
    <property type="term" value="P:protein quality control for misfolded or incompletely synthesized proteins"/>
    <property type="evidence" value="ECO:0000318"/>
    <property type="project" value="GO_Central"/>
</dbReference>
<dbReference type="GO" id="GO:0006508">
    <property type="term" value="P:proteolysis"/>
    <property type="evidence" value="ECO:0000269"/>
    <property type="project" value="EcoCyc"/>
</dbReference>
<dbReference type="GO" id="GO:0051603">
    <property type="term" value="P:proteolysis involved in protein catabolic process"/>
    <property type="evidence" value="ECO:0000314"/>
    <property type="project" value="UniProtKB"/>
</dbReference>
<dbReference type="CDD" id="cd10839">
    <property type="entry name" value="cpPDZ1_DegP-like"/>
    <property type="match status" value="1"/>
</dbReference>
<dbReference type="CDD" id="cd23084">
    <property type="entry name" value="cpPDZ2_DegP-like"/>
    <property type="match status" value="1"/>
</dbReference>
<dbReference type="FunFam" id="2.30.42.10:FF:000037">
    <property type="entry name" value="Periplasmic serine endoprotease DegP-like"/>
    <property type="match status" value="1"/>
</dbReference>
<dbReference type="FunFam" id="2.30.42.10:FF:000050">
    <property type="entry name" value="Periplasmic serine endoprotease DegP-like"/>
    <property type="match status" value="1"/>
</dbReference>
<dbReference type="FunFam" id="2.40.10.120:FF:000001">
    <property type="entry name" value="Periplasmic serine endoprotease DegP-like"/>
    <property type="match status" value="1"/>
</dbReference>
<dbReference type="FunFam" id="2.40.10.10:FF:000001">
    <property type="entry name" value="Periplasmic serine protease DegS"/>
    <property type="match status" value="1"/>
</dbReference>
<dbReference type="Gene3D" id="2.30.42.10">
    <property type="match status" value="2"/>
</dbReference>
<dbReference type="Gene3D" id="2.40.10.120">
    <property type="match status" value="1"/>
</dbReference>
<dbReference type="InterPro" id="IPR001478">
    <property type="entry name" value="PDZ"/>
</dbReference>
<dbReference type="InterPro" id="IPR036034">
    <property type="entry name" value="PDZ_sf"/>
</dbReference>
<dbReference type="InterPro" id="IPR011782">
    <property type="entry name" value="Pept_S1C_Do"/>
</dbReference>
<dbReference type="InterPro" id="IPR009003">
    <property type="entry name" value="Peptidase_S1_PA"/>
</dbReference>
<dbReference type="InterPro" id="IPR001940">
    <property type="entry name" value="Peptidase_S1C"/>
</dbReference>
<dbReference type="NCBIfam" id="TIGR02037">
    <property type="entry name" value="degP_htrA_DO"/>
    <property type="match status" value="1"/>
</dbReference>
<dbReference type="NCBIfam" id="NF007526">
    <property type="entry name" value="PRK10139.1"/>
    <property type="match status" value="1"/>
</dbReference>
<dbReference type="PANTHER" id="PTHR22939">
    <property type="entry name" value="SERINE PROTEASE FAMILY S1C HTRA-RELATED"/>
    <property type="match status" value="1"/>
</dbReference>
<dbReference type="PANTHER" id="PTHR22939:SF129">
    <property type="entry name" value="SERINE PROTEASE HTRA2, MITOCHONDRIAL"/>
    <property type="match status" value="1"/>
</dbReference>
<dbReference type="Pfam" id="PF00595">
    <property type="entry name" value="PDZ"/>
    <property type="match status" value="2"/>
</dbReference>
<dbReference type="Pfam" id="PF13365">
    <property type="entry name" value="Trypsin_2"/>
    <property type="match status" value="1"/>
</dbReference>
<dbReference type="PRINTS" id="PR00834">
    <property type="entry name" value="PROTEASES2C"/>
</dbReference>
<dbReference type="SMART" id="SM00228">
    <property type="entry name" value="PDZ"/>
    <property type="match status" value="2"/>
</dbReference>
<dbReference type="SUPFAM" id="SSF50156">
    <property type="entry name" value="PDZ domain-like"/>
    <property type="match status" value="2"/>
</dbReference>
<dbReference type="SUPFAM" id="SSF50494">
    <property type="entry name" value="Trypsin-like serine proteases"/>
    <property type="match status" value="1"/>
</dbReference>
<dbReference type="PROSITE" id="PS50106">
    <property type="entry name" value="PDZ"/>
    <property type="match status" value="2"/>
</dbReference>
<reference key="1">
    <citation type="submission" date="1994-10" db="EMBL/GenBank/DDBJ databases">
        <authorList>
            <person name="Bass S."/>
            <person name="Gu Q."/>
            <person name="Goddard A."/>
        </authorList>
    </citation>
    <scope>NUCLEOTIDE SEQUENCE [GENOMIC DNA]</scope>
    <source>
        <strain>K12 / W3110 / ATCC 27325 / DSM 5911</strain>
    </source>
</reference>
<reference key="2">
    <citation type="journal article" date="1996" name="J. Bacteriol.">
        <title>Characterization of degQ and degS, Escherichia coli genes encoding homologs of the DegP protease.</title>
        <authorList>
            <person name="Waller P.R."/>
            <person name="Sauer R.T."/>
        </authorList>
    </citation>
    <scope>NUCLEOTIDE SEQUENCE [GENOMIC DNA]</scope>
    <scope>PROTEIN SEQUENCE OF 28-32</scope>
    <scope>FUNCTION AS A SERINE PROTEASE</scope>
    <scope>SUBCELLULAR LOCATION</scope>
    <scope>ACTIVITY REGULATION</scope>
    <scope>NOMENCLATURE</scope>
    <source>
        <strain>K12 / W3110 / ATCC 27325 / DSM 5911</strain>
    </source>
</reference>
<reference key="3">
    <citation type="journal article" date="1997" name="Science">
        <title>The complete genome sequence of Escherichia coli K-12.</title>
        <authorList>
            <person name="Blattner F.R."/>
            <person name="Plunkett G. III"/>
            <person name="Bloch C.A."/>
            <person name="Perna N.T."/>
            <person name="Burland V."/>
            <person name="Riley M."/>
            <person name="Collado-Vides J."/>
            <person name="Glasner J.D."/>
            <person name="Rode C.K."/>
            <person name="Mayhew G.F."/>
            <person name="Gregor J."/>
            <person name="Davis N.W."/>
            <person name="Kirkpatrick H.A."/>
            <person name="Goeden M.A."/>
            <person name="Rose D.J."/>
            <person name="Mau B."/>
            <person name="Shao Y."/>
        </authorList>
    </citation>
    <scope>NUCLEOTIDE SEQUENCE [LARGE SCALE GENOMIC DNA]</scope>
    <source>
        <strain>K12 / MG1655 / ATCC 47076</strain>
    </source>
</reference>
<reference key="4">
    <citation type="journal article" date="2006" name="Mol. Syst. Biol.">
        <title>Highly accurate genome sequences of Escherichia coli K-12 strains MG1655 and W3110.</title>
        <authorList>
            <person name="Hayashi K."/>
            <person name="Morooka N."/>
            <person name="Yamamoto Y."/>
            <person name="Fujita K."/>
            <person name="Isono K."/>
            <person name="Choi S."/>
            <person name="Ohtsubo E."/>
            <person name="Baba T."/>
            <person name="Wanner B.L."/>
            <person name="Mori H."/>
            <person name="Horiuchi T."/>
        </authorList>
    </citation>
    <scope>NUCLEOTIDE SEQUENCE [LARGE SCALE GENOMIC DNA]</scope>
    <source>
        <strain>K12 / W3110 / ATCC 27325 / DSM 5911</strain>
    </source>
</reference>
<reference key="5">
    <citation type="journal article" date="1996" name="J. Bacteriol.">
        <title>The DegP and DegQ periplasmic endoproteases of Escherichia coli: specificity for cleavage sites and substrate conformation.</title>
        <authorList>
            <person name="Kolmar H."/>
            <person name="Waller P.R."/>
            <person name="Sauer R.T."/>
        </authorList>
    </citation>
    <scope>FUNCTION AS A SERINE PROTEASE</scope>
    <scope>SUBSTRATE SPECIFICITY</scope>
    <scope>SUBUNIT</scope>
</reference>
<reference key="6">
    <citation type="journal article" date="2011" name="J. Biol. Chem.">
        <title>Molecular adaptation of the DegQ protease to exert protein quality control in the bacterial cell envelope.</title>
        <authorList>
            <person name="Sawa J."/>
            <person name="Malet H."/>
            <person name="Krojer T."/>
            <person name="Canellas F."/>
            <person name="Ehrmann M."/>
            <person name="Clausen T."/>
        </authorList>
    </citation>
    <scope>X-RAY CRYSTALLOGRAPHY (2.6 ANGSTROMS) OF 28-264 IN COMPLEX WITH SUBSTRATE ANALOGS</scope>
    <scope>REACTION MECHANISM</scope>
    <scope>MUTAGENESIS OF SER-187; ARG-191 AND ARG-329</scope>
    <scope>BIOPHYSICOCHEMICAL PROPERTIES</scope>
    <scope>SUBUNIT</scope>
    <scope>ACTIVE SITE</scope>
</reference>
<accession>P39099</accession>
<accession>Q2M8X9</accession>
<gene>
    <name type="primary">degQ</name>
    <name type="synonym">hhoA</name>
    <name type="ordered locus">b3234</name>
    <name type="ordered locus">JW3203</name>
</gene>
<proteinExistence type="evidence at protein level"/>
<evidence type="ECO:0000250" key="1"/>
<evidence type="ECO:0000255" key="2">
    <source>
        <dbReference type="PROSITE-ProRule" id="PRU00143"/>
    </source>
</evidence>
<evidence type="ECO:0000269" key="3">
    <source>
    </source>
</evidence>
<evidence type="ECO:0000269" key="4">
    <source>
    </source>
</evidence>
<evidence type="ECO:0000269" key="5">
    <source>
    </source>
</evidence>
<evidence type="ECO:0000305" key="6"/>
<evidence type="ECO:0007829" key="7">
    <source>
        <dbReference type="PDB" id="3STI"/>
    </source>
</evidence>
<evidence type="ECO:0007829" key="8">
    <source>
        <dbReference type="PDB" id="3STJ"/>
    </source>
</evidence>
<name>DEGQ_ECOLI</name>
<sequence length="455" mass="47205">MKKQTQLLSALALSVGLTLSASFQAVASIPGQVADQAPLPSLAPMLEKVLPAVVSVRVEGTASQGQKIPEEFKKFFGDDLPDQPAQPFEGLGSGVIINASKGYVLTNNHVINQAQKISIQLNDGREFDAKLIGSDDQSDIALLQIQNPSKLTQIAIADSDKLRVGDFAVAVGNPFGLGQTATSGIVSALGRSGLNLEGLENFIQTDASINRGNSGGALLNLNGELIGINTAILAPGGGSVGIGFAIPSNMARTLAQQLIDFGEIKRGLLGIKGTEMSADIAKAFNLDVQRGAFVSEVLPGSGSAKAGVKAGDIITSLNGKPLNSFAELRSRIATTEPGTKVKLGLLRNGKPLEVEVTLDTSTSSSASAEMITPALEGATLSDGQLKDGGKGIKIDEVVKGSPAAQAGLQKDDVIIGVNRDRVNSIAEMRKVLAAKPAIIALQIVRGNESIYLLMR</sequence>
<keyword id="KW-0002">3D-structure</keyword>
<keyword id="KW-0903">Direct protein sequencing</keyword>
<keyword id="KW-0378">Hydrolase</keyword>
<keyword id="KW-0574">Periplasm</keyword>
<keyword id="KW-0645">Protease</keyword>
<keyword id="KW-1185">Reference proteome</keyword>
<keyword id="KW-0677">Repeat</keyword>
<keyword id="KW-0720">Serine protease</keyword>
<keyword id="KW-0732">Signal</keyword>
<keyword id="KW-0346">Stress response</keyword>
<organism>
    <name type="scientific">Escherichia coli (strain K12)</name>
    <dbReference type="NCBI Taxonomy" id="83333"/>
    <lineage>
        <taxon>Bacteria</taxon>
        <taxon>Pseudomonadati</taxon>
        <taxon>Pseudomonadota</taxon>
        <taxon>Gammaproteobacteria</taxon>
        <taxon>Enterobacterales</taxon>
        <taxon>Enterobacteriaceae</taxon>
        <taxon>Escherichia</taxon>
    </lineage>
</organism>